<proteinExistence type="evidence at transcript level"/>
<keyword id="KW-0238">DNA-binding</keyword>
<keyword id="KW-0539">Nucleus</keyword>
<keyword id="KW-1185">Reference proteome</keyword>
<gene>
    <name type="primary">TGA1B</name>
</gene>
<organism>
    <name type="scientific">Nicotiana tabacum</name>
    <name type="common">Common tobacco</name>
    <dbReference type="NCBI Taxonomy" id="4097"/>
    <lineage>
        <taxon>Eukaryota</taxon>
        <taxon>Viridiplantae</taxon>
        <taxon>Streptophyta</taxon>
        <taxon>Embryophyta</taxon>
        <taxon>Tracheophyta</taxon>
        <taxon>Spermatophyta</taxon>
        <taxon>Magnoliopsida</taxon>
        <taxon>eudicotyledons</taxon>
        <taxon>Gunneridae</taxon>
        <taxon>Pentapetalae</taxon>
        <taxon>asterids</taxon>
        <taxon>lamiids</taxon>
        <taxon>Solanales</taxon>
        <taxon>Solanaceae</taxon>
        <taxon>Nicotianoideae</taxon>
        <taxon>Nicotianeae</taxon>
        <taxon>Nicotiana</taxon>
    </lineage>
</organism>
<dbReference type="EMBL" id="X16450">
    <property type="protein sequence ID" value="CAA34469.1"/>
    <property type="molecule type" value="mRNA"/>
</dbReference>
<dbReference type="PIR" id="S05453">
    <property type="entry name" value="S05453"/>
</dbReference>
<dbReference type="SMR" id="P14233"/>
<dbReference type="STRING" id="4097.P14233"/>
<dbReference type="PaxDb" id="4097-P14233"/>
<dbReference type="Proteomes" id="UP000084051">
    <property type="component" value="Unplaced"/>
</dbReference>
<dbReference type="GO" id="GO:0005634">
    <property type="term" value="C:nucleus"/>
    <property type="evidence" value="ECO:0007669"/>
    <property type="project" value="UniProtKB-SubCell"/>
</dbReference>
<dbReference type="GO" id="GO:0003677">
    <property type="term" value="F:DNA binding"/>
    <property type="evidence" value="ECO:0007669"/>
    <property type="project" value="UniProtKB-KW"/>
</dbReference>
<dbReference type="GO" id="GO:0003700">
    <property type="term" value="F:DNA-binding transcription factor activity"/>
    <property type="evidence" value="ECO:0007669"/>
    <property type="project" value="InterPro"/>
</dbReference>
<dbReference type="CDD" id="cd14704">
    <property type="entry name" value="bZIP_HY5-like"/>
    <property type="match status" value="1"/>
</dbReference>
<dbReference type="Gene3D" id="1.20.5.170">
    <property type="match status" value="1"/>
</dbReference>
<dbReference type="InterPro" id="IPR004827">
    <property type="entry name" value="bZIP"/>
</dbReference>
<dbReference type="InterPro" id="IPR046347">
    <property type="entry name" value="bZIP_sf"/>
</dbReference>
<dbReference type="PANTHER" id="PTHR37616:SF5">
    <property type="entry name" value="BZIP TRANSCRIPTION FACTOR 17-LIKE"/>
    <property type="match status" value="1"/>
</dbReference>
<dbReference type="PANTHER" id="PTHR37616">
    <property type="entry name" value="BZIP TRANSCRIPTION FACTOR 60-LIKE"/>
    <property type="match status" value="1"/>
</dbReference>
<dbReference type="Pfam" id="PF00170">
    <property type="entry name" value="bZIP_1"/>
    <property type="match status" value="1"/>
</dbReference>
<dbReference type="SMART" id="SM00338">
    <property type="entry name" value="BRLZ"/>
    <property type="match status" value="1"/>
</dbReference>
<dbReference type="SUPFAM" id="SSF57959">
    <property type="entry name" value="Leucine zipper domain"/>
    <property type="match status" value="1"/>
</dbReference>
<dbReference type="PROSITE" id="PS50217">
    <property type="entry name" value="BZIP"/>
    <property type="match status" value="1"/>
</dbReference>
<accession>P14233</accession>
<comment type="function">
    <text>Binds specifically to the DNA sequence 5'-TGACG-3'.</text>
</comment>
<comment type="subcellular location">
    <subcellularLocation>
        <location>Nucleus</location>
    </subcellularLocation>
</comment>
<comment type="similarity">
    <text evidence="3">Belongs to the bZIP family.</text>
</comment>
<reference key="1">
    <citation type="journal article" date="1989" name="Nature">
        <title>Two tobacco DNA-binding proteins with homology to the nuclear factor CREB.</title>
        <authorList>
            <person name="Katagiri F."/>
            <person name="Lam E."/>
            <person name="Chua N.H."/>
        </authorList>
    </citation>
    <scope>NUCLEOTIDE SEQUENCE [MRNA]</scope>
</reference>
<feature type="chain" id="PRO_0000076547" description="TGACG-sequence-specific DNA-binding protein TGA-1B">
    <location>
        <begin position="1" status="less than"/>
        <end position="242"/>
    </location>
</feature>
<feature type="domain" description="bZIP" evidence="1">
    <location>
        <begin position="183"/>
        <end position="242"/>
    </location>
</feature>
<feature type="region of interest" description="Disordered" evidence="2">
    <location>
        <begin position="1"/>
        <end position="125"/>
    </location>
</feature>
<feature type="region of interest" description="Basic motif" evidence="1">
    <location>
        <begin position="185"/>
        <end position="216"/>
    </location>
</feature>
<feature type="region of interest" description="Leucine-zipper" evidence="1">
    <location>
        <begin position="225"/>
        <end position="239"/>
    </location>
</feature>
<feature type="compositionally biased region" description="Polar residues" evidence="2">
    <location>
        <begin position="18"/>
        <end position="45"/>
    </location>
</feature>
<feature type="compositionally biased region" description="Basic and acidic residues" evidence="2">
    <location>
        <begin position="66"/>
        <end position="79"/>
    </location>
</feature>
<feature type="compositionally biased region" description="Polar residues" evidence="2">
    <location>
        <begin position="88"/>
        <end position="125"/>
    </location>
</feature>
<feature type="non-terminal residue">
    <location>
        <position position="1"/>
    </location>
</feature>
<evidence type="ECO:0000255" key="1">
    <source>
        <dbReference type="PROSITE-ProRule" id="PRU00978"/>
    </source>
</evidence>
<evidence type="ECO:0000256" key="2">
    <source>
        <dbReference type="SAM" id="MobiDB-lite"/>
    </source>
</evidence>
<evidence type="ECO:0000305" key="3"/>
<name>TGA1B_TOBAC</name>
<protein>
    <recommendedName>
        <fullName>TGACG-sequence-specific DNA-binding protein TGA-1B</fullName>
        <shortName>TGA1b</shortName>
    </recommendedName>
    <alternativeName>
        <fullName>HSBF</fullName>
    </alternativeName>
</protein>
<sequence length="242" mass="26226">EFCDFSGNQAAGGVMVMDTSSPELRQSSSGSDVLNATSSTSSHQVSGDVAGYLNVPSPESNGSNHEGSRESANDNKGLGDARVLNCHSPESQGSGNYGSNVSEGLNYPSDSNKSVHSSPNFENNSIKNGAVEEKIKLEGVNANISKCSSLLKRKKSSEDSNNINIHQKLTNVALSDNVNNDEDEKKRARLVRNRESAQLSRQRKKHYVEELEDKVRIMHSTIQDLNAKVAYIIAENATLKTQ</sequence>